<organism>
    <name type="scientific">Homo sapiens</name>
    <name type="common">Human</name>
    <dbReference type="NCBI Taxonomy" id="9606"/>
    <lineage>
        <taxon>Eukaryota</taxon>
        <taxon>Metazoa</taxon>
        <taxon>Chordata</taxon>
        <taxon>Craniata</taxon>
        <taxon>Vertebrata</taxon>
        <taxon>Euteleostomi</taxon>
        <taxon>Mammalia</taxon>
        <taxon>Eutheria</taxon>
        <taxon>Euarchontoglires</taxon>
        <taxon>Primates</taxon>
        <taxon>Haplorrhini</taxon>
        <taxon>Catarrhini</taxon>
        <taxon>Hominidae</taxon>
        <taxon>Homo</taxon>
    </lineage>
</organism>
<keyword id="KW-0025">Alternative splicing</keyword>
<keyword id="KW-0112">Calmodulin-binding</keyword>
<keyword id="KW-0966">Cell projection</keyword>
<keyword id="KW-0963">Cytoplasm</keyword>
<keyword id="KW-0206">Cytoskeleton</keyword>
<keyword id="KW-0493">Microtubule</keyword>
<keyword id="KW-0597">Phosphoprotein</keyword>
<keyword id="KW-1267">Proteomics identification</keyword>
<keyword id="KW-1185">Reference proteome</keyword>
<keyword id="KW-0677">Repeat</keyword>
<comment type="function">
    <text>The exact function of MAP2 is unknown but MAPs may stabilize the microtubules against depolymerization. They also seem to have a stiffening effect on microtubules.</text>
</comment>
<comment type="subunit">
    <text evidence="2 7">Interacts with KNDC1 (via KIND2); the interaction enhances MAP2 phosphorylation and localizes KNDC1 to dendrites. Interacts with DPYSL5 (PubMed:33894126).</text>
</comment>
<comment type="interaction">
    <interactant intactId="EBI-2682460">
        <id>P11137</id>
    </interactant>
    <interactant intactId="EBI-718750">
        <id>Q13951</id>
        <label>CBFB</label>
    </interactant>
    <organismsDiffer>false</organismsDiffer>
    <experiments>2</experiments>
</comment>
<comment type="interaction">
    <interactant intactId="EBI-25832133">
        <id>P11137-4</id>
    </interactant>
    <interactant intactId="EBI-1222467">
        <id>P02649</id>
        <label>APOE</label>
    </interactant>
    <organismsDiffer>false</organismsDiffer>
    <experiments>3</experiments>
</comment>
<comment type="subcellular location">
    <subcellularLocation>
        <location evidence="10">Cytoplasm</location>
        <location evidence="10">Cytoskeleton</location>
    </subcellularLocation>
    <subcellularLocation>
        <location evidence="2">Cell projection</location>
        <location evidence="2">Dendrite</location>
    </subcellularLocation>
</comment>
<comment type="alternative products">
    <event type="alternative splicing"/>
    <isoform>
        <id>P11137-1</id>
        <name>1</name>
        <name>MAP2b</name>
        <sequence type="displayed"/>
    </isoform>
    <isoform>
        <id>P11137-2</id>
        <name>2</name>
        <name>MAP2c</name>
        <sequence type="described" ref="VSP_003197"/>
    </isoform>
    <isoform>
        <id>P11137-3</id>
        <name>3</name>
        <sequence type="described" ref="VSP_011302"/>
    </isoform>
    <isoform>
        <id>P11137-4</id>
        <name>4</name>
        <sequence type="described" ref="VSP_043596 VSP_043597 VSP_043598"/>
    </isoform>
    <text>Additional isoforms seem to exist.</text>
</comment>
<comment type="PTM">
    <text evidence="1 2">Phosphorylated at serine residues in K-X-G-S motifs by MAP/microtubule affinity-regulating kinase (MARK1 or MARK2), causing detachment from microtubules, and their disassembly (By similarity). Isoform 2 is probably phosphorylated by PKA at Ser-323, Ser-354 and Ser-386 and by FYN at Tyr-67. The interaction with KNDC1 enhances MAP2 threonine phosphorylation (By similarity).</text>
</comment>
<comment type="online information" name="Atlas of Genetics and Cytogenetics in Oncology and Haematology">
    <link uri="https://atlasgeneticsoncology.org/gene/44216/MAP2"/>
</comment>
<feature type="chain" id="PRO_0000072747" description="Microtubule-associated protein 2">
    <location>
        <begin position="1"/>
        <end position="1827"/>
    </location>
</feature>
<feature type="repeat" description="Tau/MAP 1">
    <location>
        <begin position="1661"/>
        <end position="1691"/>
    </location>
</feature>
<feature type="repeat" description="Tau/MAP 2">
    <location>
        <begin position="1692"/>
        <end position="1722"/>
    </location>
</feature>
<feature type="repeat" description="Tau/MAP 3">
    <location>
        <begin position="1723"/>
        <end position="1754"/>
    </location>
</feature>
<feature type="region of interest" description="Disordered" evidence="4">
    <location>
        <begin position="1"/>
        <end position="88"/>
    </location>
</feature>
<feature type="region of interest" description="Disordered" evidence="4">
    <location>
        <begin position="109"/>
        <end position="221"/>
    </location>
</feature>
<feature type="region of interest" description="Disordered" evidence="4">
    <location>
        <begin position="340"/>
        <end position="497"/>
    </location>
</feature>
<feature type="region of interest" description="Disordered" evidence="4">
    <location>
        <begin position="579"/>
        <end position="660"/>
    </location>
</feature>
<feature type="region of interest" description="Interaction with KNDC1" evidence="2">
    <location>
        <begin position="701"/>
        <end position="744"/>
    </location>
</feature>
<feature type="region of interest" description="Disordered" evidence="4">
    <location>
        <begin position="931"/>
        <end position="988"/>
    </location>
</feature>
<feature type="region of interest" description="Disordered" evidence="4">
    <location>
        <begin position="1073"/>
        <end position="1160"/>
    </location>
</feature>
<feature type="region of interest" description="Disordered" evidence="4">
    <location>
        <begin position="1197"/>
        <end position="1216"/>
    </location>
</feature>
<feature type="region of interest" description="Disordered" evidence="4">
    <location>
        <begin position="1297"/>
        <end position="1378"/>
    </location>
</feature>
<feature type="region of interest" description="Disordered" evidence="4">
    <location>
        <begin position="1403"/>
        <end position="1460"/>
    </location>
</feature>
<feature type="region of interest" description="Calmodulin-binding" evidence="3">
    <location>
        <begin position="1447"/>
        <end position="1467"/>
    </location>
</feature>
<feature type="region of interest" description="Disordered" evidence="4">
    <location>
        <begin position="1471"/>
        <end position="1490"/>
    </location>
</feature>
<feature type="region of interest" description="Disordered" evidence="4">
    <location>
        <begin position="1506"/>
        <end position="1638"/>
    </location>
</feature>
<feature type="region of interest" description="Disordered" evidence="4">
    <location>
        <begin position="1779"/>
        <end position="1801"/>
    </location>
</feature>
<feature type="compositionally biased region" description="Basic and acidic residues" evidence="4">
    <location>
        <begin position="1"/>
        <end position="11"/>
    </location>
</feature>
<feature type="compositionally biased region" description="Polar residues" evidence="4">
    <location>
        <begin position="63"/>
        <end position="73"/>
    </location>
</feature>
<feature type="compositionally biased region" description="Basic and acidic residues" evidence="4">
    <location>
        <begin position="109"/>
        <end position="119"/>
    </location>
</feature>
<feature type="compositionally biased region" description="Low complexity" evidence="4">
    <location>
        <begin position="120"/>
        <end position="133"/>
    </location>
</feature>
<feature type="compositionally biased region" description="Basic and acidic residues" evidence="4">
    <location>
        <begin position="175"/>
        <end position="194"/>
    </location>
</feature>
<feature type="compositionally biased region" description="Basic and acidic residues" evidence="4">
    <location>
        <begin position="207"/>
        <end position="221"/>
    </location>
</feature>
<feature type="compositionally biased region" description="Basic and acidic residues" evidence="4">
    <location>
        <begin position="364"/>
        <end position="380"/>
    </location>
</feature>
<feature type="compositionally biased region" description="Basic and acidic residues" evidence="4">
    <location>
        <begin position="392"/>
        <end position="415"/>
    </location>
</feature>
<feature type="compositionally biased region" description="Polar residues" evidence="4">
    <location>
        <begin position="416"/>
        <end position="430"/>
    </location>
</feature>
<feature type="compositionally biased region" description="Basic and acidic residues" evidence="4">
    <location>
        <begin position="435"/>
        <end position="467"/>
    </location>
</feature>
<feature type="compositionally biased region" description="Basic and acidic residues" evidence="4">
    <location>
        <begin position="596"/>
        <end position="606"/>
    </location>
</feature>
<feature type="compositionally biased region" description="Basic and acidic residues" evidence="4">
    <location>
        <begin position="945"/>
        <end position="982"/>
    </location>
</feature>
<feature type="compositionally biased region" description="Basic and acidic residues" evidence="4">
    <location>
        <begin position="1097"/>
        <end position="1155"/>
    </location>
</feature>
<feature type="compositionally biased region" description="Acidic residues" evidence="4">
    <location>
        <begin position="1327"/>
        <end position="1337"/>
    </location>
</feature>
<feature type="compositionally biased region" description="Basic and acidic residues" evidence="4">
    <location>
        <begin position="1354"/>
        <end position="1376"/>
    </location>
</feature>
<feature type="compositionally biased region" description="Basic and acidic residues" evidence="4">
    <location>
        <begin position="1407"/>
        <end position="1425"/>
    </location>
</feature>
<feature type="compositionally biased region" description="Basic residues" evidence="4">
    <location>
        <begin position="1426"/>
        <end position="1435"/>
    </location>
</feature>
<feature type="compositionally biased region" description="Basic and acidic residues" evidence="4">
    <location>
        <begin position="1440"/>
        <end position="1459"/>
    </location>
</feature>
<feature type="compositionally biased region" description="Basic and acidic residues" evidence="4">
    <location>
        <begin position="1522"/>
        <end position="1539"/>
    </location>
</feature>
<feature type="compositionally biased region" description="Low complexity" evidence="4">
    <location>
        <begin position="1541"/>
        <end position="1552"/>
    </location>
</feature>
<feature type="compositionally biased region" description="Low complexity" evidence="4">
    <location>
        <begin position="1562"/>
        <end position="1574"/>
    </location>
</feature>
<feature type="compositionally biased region" description="Low complexity" evidence="4">
    <location>
        <begin position="1587"/>
        <end position="1603"/>
    </location>
</feature>
<feature type="compositionally biased region" description="Polar residues" evidence="4">
    <location>
        <begin position="1609"/>
        <end position="1619"/>
    </location>
</feature>
<feature type="modified residue" description="Phosphoserine" evidence="2">
    <location>
        <position position="136"/>
    </location>
</feature>
<feature type="modified residue" description="Phosphoserine" evidence="2">
    <location>
        <position position="140"/>
    </location>
</feature>
<feature type="modified residue" description="Phosphoserine" evidence="2">
    <location>
        <position position="143"/>
    </location>
</feature>
<feature type="modified residue" description="Phosphoserine" evidence="2">
    <location>
        <position position="285"/>
    </location>
</feature>
<feature type="modified residue" description="Phosphoserine" evidence="2">
    <location>
        <position position="498"/>
    </location>
</feature>
<feature type="modified residue" description="Phosphoserine" evidence="2">
    <location>
        <position position="601"/>
    </location>
</feature>
<feature type="modified residue" description="Phosphoserine" evidence="2">
    <location>
        <position position="605"/>
    </location>
</feature>
<feature type="modified residue" description="Phosphoserine" evidence="2">
    <location>
        <position position="610"/>
    </location>
</feature>
<feature type="modified residue" description="Phosphoserine" evidence="1">
    <location>
        <position position="629"/>
    </location>
</feature>
<feature type="modified residue" description="Phosphoserine" evidence="2">
    <location>
        <position position="725"/>
    </location>
</feature>
<feature type="modified residue" description="Phosphoserine" evidence="2">
    <location>
        <position position="729"/>
    </location>
</feature>
<feature type="modified residue" description="Phosphothreonine" evidence="2">
    <location>
        <position position="733"/>
    </location>
</feature>
<feature type="modified residue" description="Phosphoserine" evidence="2">
    <location>
        <position position="736"/>
    </location>
</feature>
<feature type="modified residue" description="Phosphoserine" evidence="2">
    <location>
        <position position="738"/>
    </location>
</feature>
<feature type="modified residue" description="Phosphotyrosine" evidence="2">
    <location>
        <position position="745"/>
    </location>
</feature>
<feature type="modified residue" description="Phosphoserine" evidence="2">
    <location>
        <position position="821"/>
    </location>
</feature>
<feature type="modified residue" description="Phosphoserine" evidence="1">
    <location>
        <position position="881"/>
    </location>
</feature>
<feature type="modified residue" description="Phosphoserine" evidence="1">
    <location>
        <position position="890"/>
    </location>
</feature>
<feature type="modified residue" description="Phosphoserine" evidence="1">
    <location>
        <position position="936"/>
    </location>
</feature>
<feature type="modified residue" description="Phosphoserine" evidence="2">
    <location>
        <position position="1133"/>
    </location>
</feature>
<feature type="modified residue" description="Phosphoserine" evidence="2">
    <location>
        <position position="1134"/>
    </location>
</feature>
<feature type="modified residue" description="Phosphoserine" evidence="2">
    <location>
        <position position="1139"/>
    </location>
</feature>
<feature type="modified residue" description="Phosphothreonine" evidence="1">
    <location>
        <position position="1154"/>
    </location>
</feature>
<feature type="modified residue" description="Phosphoserine" evidence="2">
    <location>
        <position position="1155"/>
    </location>
</feature>
<feature type="modified residue" description="Phosphoserine" evidence="2">
    <location>
        <position position="1159"/>
    </location>
</feature>
<feature type="modified residue" description="Phosphoserine" evidence="11">
    <location>
        <position position="1347"/>
    </location>
</feature>
<feature type="modified residue" description="Phosphoserine" evidence="11">
    <location>
        <position position="1353"/>
    </location>
</feature>
<feature type="modified residue" description="Phosphoserine" evidence="2">
    <location>
        <position position="1534"/>
    </location>
</feature>
<feature type="modified residue" description="Phosphoserine" evidence="2">
    <location>
        <position position="1555"/>
    </location>
</feature>
<feature type="modified residue" description="Phosphoserine" evidence="2">
    <location>
        <position position="1588"/>
    </location>
</feature>
<feature type="modified residue" description="Phosphothreonine" evidence="2">
    <location>
        <position position="1602"/>
    </location>
</feature>
<feature type="modified residue" description="Phosphothreonine" evidence="2">
    <location>
        <position position="1605"/>
    </location>
</feature>
<feature type="modified residue" description="Phosphothreonine" evidence="2">
    <location>
        <position position="1616"/>
    </location>
</feature>
<feature type="modified residue" description="Phosphothreonine" evidence="2">
    <location>
        <position position="1619"/>
    </location>
</feature>
<feature type="modified residue" description="Phosphothreonine" evidence="2">
    <location>
        <position position="1649"/>
    </location>
</feature>
<feature type="modified residue" description="Phosphoserine" evidence="1">
    <location>
        <position position="1653"/>
    </location>
</feature>
<feature type="modified residue" description="Phosphoserine; by MARK1" evidence="1">
    <location>
        <position position="1679"/>
    </location>
</feature>
<feature type="modified residue" description="Phosphoserine" evidence="12">
    <location>
        <position position="1782"/>
    </location>
</feature>
<feature type="modified residue" description="Phosphoserine" evidence="2">
    <location>
        <position position="1787"/>
    </location>
</feature>
<feature type="modified residue" description="Phosphoserine" evidence="2">
    <location>
        <position position="1790"/>
    </location>
</feature>
<feature type="modified residue" description="Phosphoserine" evidence="1">
    <location>
        <position position="1795"/>
    </location>
</feature>
<feature type="modified residue" description="Phosphoserine" evidence="1">
    <location>
        <position position="1808"/>
    </location>
</feature>
<feature type="splice variant" id="VSP_003197" description="In isoform 2." evidence="8 9">
    <location>
        <begin position="152"/>
        <end position="1507"/>
    </location>
</feature>
<feature type="splice variant" id="VSP_043596" description="In isoform 4." evidence="8">
    <original>DLLTASKMEFHDQQELTPSTAEPSDQKEKESEKQSKPGEDLKHAALVSQPETTKTYPDKKDMQGTEEEKAPLALFGHT</original>
    <variation>AAGGESALAPSVFKQAKDKVSNSTLSKIPALQGSTKSPRYSSACPSTTKRATFSDSLLIQPTSAGSTDRLPYSKSGNK</variation>
    <location>
        <begin position="152"/>
        <end position="229"/>
    </location>
</feature>
<feature type="splice variant" id="VSP_011302" description="In isoform 3." evidence="9">
    <location>
        <begin position="152"/>
        <end position="155"/>
    </location>
</feature>
<feature type="splice variant" id="VSP_043597" description="In isoform 4." evidence="8">
    <location>
        <begin position="230"/>
        <end position="1528"/>
    </location>
</feature>
<feature type="splice variant" id="VSP_043598" description="In isoform 4." evidence="8">
    <original>Q</original>
    <variation>QVRILNKKIDFSKVQSRCGSKDNIKHSAGGGN</variation>
    <location>
        <position position="1691"/>
    </location>
</feature>
<feature type="sequence variant" id="VAR_019612" description="In dbSNP:rs2271251.">
    <original>A</original>
    <variation>G</variation>
    <location>
        <position position="82"/>
    </location>
</feature>
<feature type="sequence variant" id="VAR_050019" description="In dbSNP:rs6749066.">
    <original>E</original>
    <variation>G</variation>
    <location>
        <position position="179"/>
    </location>
</feature>
<feature type="sequence variant" id="VAR_036014" description="In a colorectal cancer sample; somatic mutation." evidence="6">
    <original>E</original>
    <variation>D</variation>
    <location>
        <position position="277"/>
    </location>
</feature>
<feature type="sequence variant" id="VAR_019613" description="In dbSNP:rs741006.">
    <original>R</original>
    <variation>K</variation>
    <location>
        <position position="423"/>
    </location>
</feature>
<feature type="sequence variant" id="VAR_036015" description="In a colorectal cancer sample; somatic mutation; dbSNP:rs146432517." evidence="6">
    <original>P</original>
    <variation>L</variation>
    <location>
        <position position="705"/>
    </location>
</feature>
<feature type="sequence variant" id="VAR_050020" description="In dbSNP:rs13425372.">
    <original>H</original>
    <variation>L</variation>
    <location>
        <position position="976"/>
    </location>
</feature>
<feature type="sequence variant" id="VAR_050021" description="In dbSNP:rs35927101.">
    <original>G</original>
    <variation>R</variation>
    <location>
        <position position="991"/>
    </location>
</feature>
<feature type="sequence variant" id="VAR_050022" description="In dbSNP:rs17745550.">
    <original>M</original>
    <variation>V</variation>
    <location>
        <position position="1099"/>
    </location>
</feature>
<feature type="sequence conflict" description="In Ref. 2; AAB48098/AAB48097." evidence="10" ref="2">
    <original>A</original>
    <variation>G</variation>
    <location>
        <position position="9"/>
    </location>
</feature>
<feature type="sequence conflict" description="In Ref. 1; AAA03354." evidence="10" ref="1">
    <original>A</original>
    <variation>R</variation>
    <location>
        <position position="37"/>
    </location>
</feature>
<feature type="sequence conflict" description="In Ref. 1; AAA03354." evidence="10" ref="1">
    <original>G</original>
    <variation>A</variation>
    <location>
        <position position="108"/>
    </location>
</feature>
<feature type="sequence conflict" description="In Ref. 1; AAA03354." evidence="10" ref="1">
    <original>K</original>
    <variation>S</variation>
    <location>
        <position position="187"/>
    </location>
</feature>
<feature type="sequence conflict" description="In Ref. 1; AAA03354, 2; AAB48098 and 5; AAA59552." evidence="10" ref="1 2 5">
    <original>E</original>
    <variation>Q</variation>
    <location>
        <position position="1112"/>
    </location>
</feature>
<feature type="sequence conflict" description="In Ref. 2; AAB48098/AAB48097." evidence="10" ref="2">
    <original>A</original>
    <variation>GL</variation>
    <location>
        <position position="1655"/>
    </location>
</feature>
<feature type="sequence conflict" description="In Ref. 1; AAA03354." evidence="10" ref="1">
    <original>RH</original>
    <variation>D</variation>
    <location>
        <begin position="1715"/>
        <end position="1716"/>
    </location>
</feature>
<feature type="sequence conflict" description="In Ref. 1; AAA03354." evidence="10" ref="1">
    <original>A</original>
    <variation>V</variation>
    <location>
        <position position="1736"/>
    </location>
</feature>
<feature type="modified residue" description="Phosphotyrosine" evidence="5">
    <location sequence="P11137-2">
        <position position="67"/>
    </location>
</feature>
<feature type="modified residue" description="Phosphoserine" evidence="10">
    <location sequence="P11137-2">
        <position position="323"/>
    </location>
</feature>
<feature type="modified residue" description="Phosphoserine" evidence="10">
    <location sequence="P11137-2">
        <position position="354"/>
    </location>
</feature>
<feature type="modified residue" description="Phosphoserine" evidence="10">
    <location sequence="P11137-2">
        <position position="386"/>
    </location>
</feature>
<gene>
    <name type="primary">MAP2</name>
</gene>
<proteinExistence type="evidence at protein level"/>
<protein>
    <recommendedName>
        <fullName>Microtubule-associated protein 2</fullName>
        <shortName>MAP-2</shortName>
    </recommendedName>
</protein>
<dbReference type="EMBL" id="U01828">
    <property type="protein sequence ID" value="AAA03354.1"/>
    <property type="molecule type" value="mRNA"/>
</dbReference>
<dbReference type="EMBL" id="U89330">
    <property type="protein sequence ID" value="AAB48098.1"/>
    <property type="molecule type" value="mRNA"/>
</dbReference>
<dbReference type="EMBL" id="U89329">
    <property type="protein sequence ID" value="AAB48097.1"/>
    <property type="molecule type" value="mRNA"/>
</dbReference>
<dbReference type="EMBL" id="AC006385">
    <property type="status" value="NOT_ANNOTATED_CDS"/>
    <property type="molecule type" value="Genomic_DNA"/>
</dbReference>
<dbReference type="EMBL" id="AC019106">
    <property type="status" value="NOT_ANNOTATED_CDS"/>
    <property type="molecule type" value="Genomic_DNA"/>
</dbReference>
<dbReference type="EMBL" id="AC079833">
    <property type="status" value="NOT_ANNOTATED_CDS"/>
    <property type="molecule type" value="Genomic_DNA"/>
</dbReference>
<dbReference type="EMBL" id="AC108072">
    <property type="status" value="NOT_ANNOTATED_CDS"/>
    <property type="molecule type" value="Genomic_DNA"/>
</dbReference>
<dbReference type="EMBL" id="CH471063">
    <property type="protein sequence ID" value="EAW70459.1"/>
    <property type="molecule type" value="Genomic_DNA"/>
</dbReference>
<dbReference type="EMBL" id="BC038857">
    <property type="protein sequence ID" value="AAH38857.1"/>
    <property type="molecule type" value="mRNA"/>
</dbReference>
<dbReference type="EMBL" id="BC110423">
    <property type="protein sequence ID" value="AAI10424.1"/>
    <property type="molecule type" value="mRNA"/>
</dbReference>
<dbReference type="EMBL" id="BC117123">
    <property type="protein sequence ID" value="AAI17124.1"/>
    <property type="molecule type" value="mRNA"/>
</dbReference>
<dbReference type="EMBL" id="BC143245">
    <property type="protein sequence ID" value="AAI43246.1"/>
    <property type="molecule type" value="mRNA"/>
</dbReference>
<dbReference type="EMBL" id="M25668">
    <property type="protein sequence ID" value="AAA59552.1"/>
    <property type="molecule type" value="mRNA"/>
</dbReference>
<dbReference type="CCDS" id="CCDS2384.1">
    <molecule id="P11137-1"/>
</dbReference>
<dbReference type="CCDS" id="CCDS2385.1">
    <molecule id="P11137-2"/>
</dbReference>
<dbReference type="CCDS" id="CCDS33369.1">
    <molecule id="P11137-4"/>
</dbReference>
<dbReference type="CCDS" id="CCDS86916.1">
    <molecule id="P11137-3"/>
</dbReference>
<dbReference type="PIR" id="I53693">
    <property type="entry name" value="QRHUMT"/>
</dbReference>
<dbReference type="PIR" id="I67793">
    <property type="entry name" value="I67793"/>
</dbReference>
<dbReference type="RefSeq" id="NP_001034627.1">
    <molecule id="P11137-4"/>
    <property type="nucleotide sequence ID" value="NM_001039538.2"/>
</dbReference>
<dbReference type="RefSeq" id="NP_001350839.1">
    <molecule id="P11137-3"/>
    <property type="nucleotide sequence ID" value="NM_001363910.2"/>
</dbReference>
<dbReference type="RefSeq" id="NP_001350840.1">
    <molecule id="P11137-3"/>
    <property type="nucleotide sequence ID" value="NM_001363911.2"/>
</dbReference>
<dbReference type="RefSeq" id="NP_001350842.1">
    <molecule id="P11137-2"/>
    <property type="nucleotide sequence ID" value="NM_001363913.2"/>
</dbReference>
<dbReference type="RefSeq" id="NP_001362422.1">
    <molecule id="P11137-2"/>
    <property type="nucleotide sequence ID" value="NM_001375493.1"/>
</dbReference>
<dbReference type="RefSeq" id="NP_001362434.1">
    <molecule id="P11137-1"/>
    <property type="nucleotide sequence ID" value="NM_001375505.1"/>
</dbReference>
<dbReference type="RefSeq" id="NP_001362455.1">
    <molecule id="P11137-1"/>
    <property type="nucleotide sequence ID" value="NM_001375526.1"/>
</dbReference>
<dbReference type="RefSeq" id="NP_001362457.1">
    <molecule id="P11137-3"/>
    <property type="nucleotide sequence ID" value="NM_001375528.1"/>
</dbReference>
<dbReference type="RefSeq" id="NP_001362463.1">
    <molecule id="P11137-1"/>
    <property type="nucleotide sequence ID" value="NM_001375534.1"/>
</dbReference>
<dbReference type="RefSeq" id="NP_001362512.1">
    <molecule id="P11137-2"/>
    <property type="nucleotide sequence ID" value="NM_001375583.1"/>
</dbReference>
<dbReference type="RefSeq" id="NP_002365.3">
    <molecule id="P11137-1"/>
    <property type="nucleotide sequence ID" value="NM_002374.3"/>
</dbReference>
<dbReference type="RefSeq" id="NP_114033.2">
    <molecule id="P11137-2"/>
    <property type="nucleotide sequence ID" value="NM_031845.3"/>
</dbReference>
<dbReference type="RefSeq" id="NP_114035.2">
    <property type="nucleotide sequence ID" value="NM_031847.2"/>
</dbReference>
<dbReference type="RefSeq" id="XP_016859607.1">
    <property type="nucleotide sequence ID" value="XM_017004118.1"/>
</dbReference>
<dbReference type="RefSeq" id="XP_016859612.1">
    <property type="nucleotide sequence ID" value="XM_017004123.1"/>
</dbReference>
<dbReference type="RefSeq" id="XP_016859613.1">
    <property type="nucleotide sequence ID" value="XM_017004124.1"/>
</dbReference>
<dbReference type="RefSeq" id="XP_016859627.1">
    <property type="nucleotide sequence ID" value="XM_017004138.1"/>
</dbReference>
<dbReference type="RefSeq" id="XP_016859628.1">
    <property type="nucleotide sequence ID" value="XM_017004139.1"/>
</dbReference>
<dbReference type="RefSeq" id="XP_016859629.1">
    <property type="nucleotide sequence ID" value="XM_017004140.1"/>
</dbReference>
<dbReference type="RefSeq" id="XP_047300346.1">
    <molecule id="P11137-4"/>
    <property type="nucleotide sequence ID" value="XM_047444390.1"/>
</dbReference>
<dbReference type="RefSeq" id="XP_047300347.1">
    <molecule id="P11137-4"/>
    <property type="nucleotide sequence ID" value="XM_047444391.1"/>
</dbReference>
<dbReference type="RefSeq" id="XP_054198079.1">
    <molecule id="P11137-4"/>
    <property type="nucleotide sequence ID" value="XM_054342104.1"/>
</dbReference>
<dbReference type="RefSeq" id="XP_054198080.1">
    <molecule id="P11137-4"/>
    <property type="nucleotide sequence ID" value="XM_054342105.1"/>
</dbReference>
<dbReference type="SMR" id="P11137"/>
<dbReference type="BioGRID" id="110305">
    <property type="interactions" value="79"/>
</dbReference>
<dbReference type="DIP" id="DIP-577N"/>
<dbReference type="FunCoup" id="P11137">
    <property type="interactions" value="517"/>
</dbReference>
<dbReference type="IntAct" id="P11137">
    <property type="interactions" value="34"/>
</dbReference>
<dbReference type="MINT" id="P11137"/>
<dbReference type="STRING" id="9606.ENSP00000353508"/>
<dbReference type="BindingDB" id="P11137"/>
<dbReference type="ChEMBL" id="CHEMBL2390810"/>
<dbReference type="DrugBank" id="DB01196">
    <property type="generic name" value="Estramustine"/>
</dbReference>
<dbReference type="GlyCosmos" id="P11137">
    <property type="glycosylation" value="7 sites, 1 glycan"/>
</dbReference>
<dbReference type="GlyGen" id="P11137">
    <property type="glycosylation" value="9 sites, 1 O-linked glycan (7 sites)"/>
</dbReference>
<dbReference type="iPTMnet" id="P11137"/>
<dbReference type="PhosphoSitePlus" id="P11137"/>
<dbReference type="SwissPalm" id="P11137"/>
<dbReference type="BioMuta" id="MAP2"/>
<dbReference type="DMDM" id="215274255"/>
<dbReference type="jPOST" id="P11137"/>
<dbReference type="MassIVE" id="P11137"/>
<dbReference type="PaxDb" id="9606-ENSP00000353508"/>
<dbReference type="PeptideAtlas" id="P11137"/>
<dbReference type="ProteomicsDB" id="52694">
    <molecule id="P11137-1"/>
</dbReference>
<dbReference type="ProteomicsDB" id="52695">
    <molecule id="P11137-2"/>
</dbReference>
<dbReference type="ProteomicsDB" id="52696">
    <molecule id="P11137-3"/>
</dbReference>
<dbReference type="ProteomicsDB" id="52697">
    <molecule id="P11137-4"/>
</dbReference>
<dbReference type="Pumba" id="P11137"/>
<dbReference type="Antibodypedia" id="2169">
    <property type="antibodies" value="1373 antibodies from 47 providers"/>
</dbReference>
<dbReference type="DNASU" id="4133"/>
<dbReference type="Ensembl" id="ENST00000199940.10">
    <molecule id="P11137-4"/>
    <property type="protein sequence ID" value="ENSP00000199940.6"/>
    <property type="gene ID" value="ENSG00000078018.22"/>
</dbReference>
<dbReference type="Ensembl" id="ENST00000360351.8">
    <molecule id="P11137-1"/>
    <property type="protein sequence ID" value="ENSP00000353508.4"/>
    <property type="gene ID" value="ENSG00000078018.22"/>
</dbReference>
<dbReference type="Ensembl" id="ENST00000361559.8">
    <molecule id="P11137-2"/>
    <property type="protein sequence ID" value="ENSP00000355290.4"/>
    <property type="gene ID" value="ENSG00000078018.22"/>
</dbReference>
<dbReference type="Ensembl" id="ENST00000392194.5">
    <molecule id="P11137-2"/>
    <property type="protein sequence ID" value="ENSP00000376032.1"/>
    <property type="gene ID" value="ENSG00000078018.22"/>
</dbReference>
<dbReference type="Ensembl" id="ENST00000447185.5">
    <molecule id="P11137-3"/>
    <property type="protein sequence ID" value="ENSP00000392164.1"/>
    <property type="gene ID" value="ENSG00000078018.22"/>
</dbReference>
<dbReference type="Ensembl" id="ENST00000682079.1">
    <molecule id="P11137-1"/>
    <property type="protein sequence ID" value="ENSP00000507035.1"/>
    <property type="gene ID" value="ENSG00000078018.22"/>
</dbReference>
<dbReference type="GeneID" id="4133"/>
<dbReference type="KEGG" id="hsa:4133"/>
<dbReference type="MANE-Select" id="ENST00000682079.1">
    <property type="protein sequence ID" value="ENSP00000507035.1"/>
    <property type="RefSeq nucleotide sequence ID" value="NM_001375505.1"/>
    <property type="RefSeq protein sequence ID" value="NP_001362434.1"/>
</dbReference>
<dbReference type="UCSC" id="uc002vdd.2">
    <molecule id="P11137-1"/>
    <property type="organism name" value="human"/>
</dbReference>
<dbReference type="AGR" id="HGNC:6839"/>
<dbReference type="CTD" id="4133"/>
<dbReference type="DisGeNET" id="4133"/>
<dbReference type="GeneCards" id="MAP2"/>
<dbReference type="HGNC" id="HGNC:6839">
    <property type="gene designation" value="MAP2"/>
</dbReference>
<dbReference type="HPA" id="ENSG00000078018">
    <property type="expression patterns" value="Group enriched (brain, retina)"/>
</dbReference>
<dbReference type="MalaCards" id="MAP2"/>
<dbReference type="MIM" id="157130">
    <property type="type" value="gene"/>
</dbReference>
<dbReference type="neXtProt" id="NX_P11137"/>
<dbReference type="OpenTargets" id="ENSG00000078018"/>
<dbReference type="PharmGKB" id="PA30583"/>
<dbReference type="VEuPathDB" id="HostDB:ENSG00000078018"/>
<dbReference type="eggNOG" id="KOG2418">
    <property type="taxonomic scope" value="Eukaryota"/>
</dbReference>
<dbReference type="GeneTree" id="ENSGT00940000156597"/>
<dbReference type="HOGENOM" id="CLU_021741_3_0_1"/>
<dbReference type="InParanoid" id="P11137"/>
<dbReference type="OrthoDB" id="9378527at2759"/>
<dbReference type="PAN-GO" id="P11137">
    <property type="GO annotations" value="4 GO annotations based on evolutionary models"/>
</dbReference>
<dbReference type="PhylomeDB" id="P11137"/>
<dbReference type="TreeFam" id="TF316358"/>
<dbReference type="PathwayCommons" id="P11137"/>
<dbReference type="SignaLink" id="P11137"/>
<dbReference type="SIGNOR" id="P11137"/>
<dbReference type="BioGRID-ORCS" id="4133">
    <property type="hits" value="9 hits in 1157 CRISPR screens"/>
</dbReference>
<dbReference type="CD-CODE" id="8C2F96ED">
    <property type="entry name" value="Centrosome"/>
</dbReference>
<dbReference type="CD-CODE" id="FB4E32DD">
    <property type="entry name" value="Presynaptic clusters and postsynaptic densities"/>
</dbReference>
<dbReference type="ChiTaRS" id="MAP2">
    <property type="organism name" value="human"/>
</dbReference>
<dbReference type="GeneWiki" id="MAP2"/>
<dbReference type="GenomeRNAi" id="4133"/>
<dbReference type="Pharos" id="P11137">
    <property type="development level" value="Tchem"/>
</dbReference>
<dbReference type="PRO" id="PR:P11137"/>
<dbReference type="Proteomes" id="UP000005640">
    <property type="component" value="Chromosome 2"/>
</dbReference>
<dbReference type="RNAct" id="P11137">
    <property type="molecule type" value="protein"/>
</dbReference>
<dbReference type="Bgee" id="ENSG00000078018">
    <property type="expression patterns" value="Expressed in Brodmann (1909) area 23 and 186 other cell types or tissues"/>
</dbReference>
<dbReference type="ExpressionAtlas" id="P11137">
    <property type="expression patterns" value="baseline and differential"/>
</dbReference>
<dbReference type="GO" id="GO:0150014">
    <property type="term" value="C:apical distal dendrite"/>
    <property type="evidence" value="ECO:0000250"/>
    <property type="project" value="ARUK-UCL"/>
</dbReference>
<dbReference type="GO" id="GO:0043203">
    <property type="term" value="C:axon hillock"/>
    <property type="evidence" value="ECO:0000250"/>
    <property type="project" value="ARUK-UCL"/>
</dbReference>
<dbReference type="GO" id="GO:0043194">
    <property type="term" value="C:axon initial segment"/>
    <property type="evidence" value="ECO:0000250"/>
    <property type="project" value="ARUK-UCL"/>
</dbReference>
<dbReference type="GO" id="GO:0097441">
    <property type="term" value="C:basal dendrite"/>
    <property type="evidence" value="ECO:0000250"/>
    <property type="project" value="ARUK-UCL"/>
</dbReference>
<dbReference type="GO" id="GO:0005929">
    <property type="term" value="C:cilium"/>
    <property type="evidence" value="ECO:0000314"/>
    <property type="project" value="HPA"/>
</dbReference>
<dbReference type="GO" id="GO:0005737">
    <property type="term" value="C:cytoplasm"/>
    <property type="evidence" value="ECO:0000250"/>
    <property type="project" value="ARUK-UCL"/>
</dbReference>
<dbReference type="GO" id="GO:0005829">
    <property type="term" value="C:cytosol"/>
    <property type="evidence" value="ECO:0000314"/>
    <property type="project" value="HPA"/>
</dbReference>
<dbReference type="GO" id="GO:0030425">
    <property type="term" value="C:dendrite"/>
    <property type="evidence" value="ECO:0000250"/>
    <property type="project" value="UniProtKB"/>
</dbReference>
<dbReference type="GO" id="GO:0032839">
    <property type="term" value="C:dendrite cytoplasm"/>
    <property type="evidence" value="ECO:0000250"/>
    <property type="project" value="ARUK-UCL"/>
</dbReference>
<dbReference type="GO" id="GO:0044307">
    <property type="term" value="C:dendritic branch"/>
    <property type="evidence" value="ECO:0000250"/>
    <property type="project" value="ARUK-UCL"/>
</dbReference>
<dbReference type="GO" id="GO:1902737">
    <property type="term" value="C:dendritic filopodium"/>
    <property type="evidence" value="ECO:0000250"/>
    <property type="project" value="ARUK-UCL"/>
</dbReference>
<dbReference type="GO" id="GO:0044294">
    <property type="term" value="C:dendritic growth cone"/>
    <property type="evidence" value="ECO:0000250"/>
    <property type="project" value="ARUK-UCL"/>
</dbReference>
<dbReference type="GO" id="GO:0043198">
    <property type="term" value="C:dendritic shaft"/>
    <property type="evidence" value="ECO:0000250"/>
    <property type="project" value="ARUK-UCL"/>
</dbReference>
<dbReference type="GO" id="GO:0150002">
    <property type="term" value="C:distal dendrite"/>
    <property type="evidence" value="ECO:0000250"/>
    <property type="project" value="ARUK-UCL"/>
</dbReference>
<dbReference type="GO" id="GO:0005874">
    <property type="term" value="C:microtubule"/>
    <property type="evidence" value="ECO:0007669"/>
    <property type="project" value="UniProtKB-KW"/>
</dbReference>
<dbReference type="GO" id="GO:0005875">
    <property type="term" value="C:microtubule associated complex"/>
    <property type="evidence" value="ECO:0000304"/>
    <property type="project" value="ProtInc"/>
</dbReference>
<dbReference type="GO" id="GO:0043005">
    <property type="term" value="C:neuron projection"/>
    <property type="evidence" value="ECO:0000250"/>
    <property type="project" value="ARUK-UCL"/>
</dbReference>
<dbReference type="GO" id="GO:0043025">
    <property type="term" value="C:neuronal cell body"/>
    <property type="evidence" value="ECO:0000250"/>
    <property type="project" value="ARUK-UCL"/>
</dbReference>
<dbReference type="GO" id="GO:0005886">
    <property type="term" value="C:plasma membrane"/>
    <property type="evidence" value="ECO:0000314"/>
    <property type="project" value="HPA"/>
</dbReference>
<dbReference type="GO" id="GO:0150001">
    <property type="term" value="C:primary dendrite"/>
    <property type="evidence" value="ECO:0000250"/>
    <property type="project" value="ARUK-UCL"/>
</dbReference>
<dbReference type="GO" id="GO:1990635">
    <property type="term" value="C:proximal dendrite"/>
    <property type="evidence" value="ECO:0000250"/>
    <property type="project" value="ARUK-UCL"/>
</dbReference>
<dbReference type="GO" id="GO:1990769">
    <property type="term" value="C:proximal neuron projection"/>
    <property type="evidence" value="ECO:0000250"/>
    <property type="project" value="ARUK-UCL"/>
</dbReference>
<dbReference type="GO" id="GO:0005516">
    <property type="term" value="F:calmodulin binding"/>
    <property type="evidence" value="ECO:0007669"/>
    <property type="project" value="UniProtKB-KW"/>
</dbReference>
<dbReference type="GO" id="GO:0002162">
    <property type="term" value="F:dystroglycan binding"/>
    <property type="evidence" value="ECO:0000353"/>
    <property type="project" value="UniProtKB"/>
</dbReference>
<dbReference type="GO" id="GO:0008017">
    <property type="term" value="F:microtubule binding"/>
    <property type="evidence" value="ECO:0000318"/>
    <property type="project" value="GO_Central"/>
</dbReference>
<dbReference type="GO" id="GO:0005198">
    <property type="term" value="F:structural molecule activity"/>
    <property type="evidence" value="ECO:0000303"/>
    <property type="project" value="ProtInc"/>
</dbReference>
<dbReference type="GO" id="GO:0048156">
    <property type="term" value="F:tau protein binding"/>
    <property type="evidence" value="ECO:0000303"/>
    <property type="project" value="ARUK-UCL"/>
</dbReference>
<dbReference type="GO" id="GO:0021954">
    <property type="term" value="P:central nervous system neuron development"/>
    <property type="evidence" value="ECO:0000270"/>
    <property type="project" value="DFLAT"/>
</dbReference>
<dbReference type="GO" id="GO:0016358">
    <property type="term" value="P:dendrite development"/>
    <property type="evidence" value="ECO:0000304"/>
    <property type="project" value="ARUK-UCL"/>
</dbReference>
<dbReference type="GO" id="GO:0048813">
    <property type="term" value="P:dendrite morphogenesis"/>
    <property type="evidence" value="ECO:0000270"/>
    <property type="project" value="DFLAT"/>
</dbReference>
<dbReference type="GO" id="GO:0000226">
    <property type="term" value="P:microtubule cytoskeleton organization"/>
    <property type="evidence" value="ECO:0000250"/>
    <property type="project" value="ARUK-UCL"/>
</dbReference>
<dbReference type="GO" id="GO:0030517">
    <property type="term" value="P:negative regulation of axon extension"/>
    <property type="evidence" value="ECO:0000250"/>
    <property type="project" value="ARUK-UCL"/>
</dbReference>
<dbReference type="GO" id="GO:0031115">
    <property type="term" value="P:negative regulation of microtubule polymerization"/>
    <property type="evidence" value="ECO:0000250"/>
    <property type="project" value="ARUK-UCL"/>
</dbReference>
<dbReference type="GO" id="GO:0031175">
    <property type="term" value="P:neuron projection development"/>
    <property type="evidence" value="ECO:0000270"/>
    <property type="project" value="DFLAT"/>
</dbReference>
<dbReference type="GO" id="GO:1901953">
    <property type="term" value="P:positive regulation of anterograde dense core granule transport"/>
    <property type="evidence" value="ECO:0000250"/>
    <property type="project" value="ARUK-UCL"/>
</dbReference>
<dbReference type="GO" id="GO:1903744">
    <property type="term" value="P:positive regulation of anterograde synaptic vesicle transport"/>
    <property type="evidence" value="ECO:0000250"/>
    <property type="project" value="ARUK-UCL"/>
</dbReference>
<dbReference type="GO" id="GO:0031113">
    <property type="term" value="P:regulation of microtubule polymerization"/>
    <property type="evidence" value="ECO:0000304"/>
    <property type="project" value="ARUK-UCL"/>
</dbReference>
<dbReference type="GO" id="GO:1902513">
    <property type="term" value="P:regulation of organelle transport along microtubule"/>
    <property type="evidence" value="ECO:0000250"/>
    <property type="project" value="ARUK-UCL"/>
</dbReference>
<dbReference type="GO" id="GO:0032880">
    <property type="term" value="P:regulation of protein localization"/>
    <property type="evidence" value="ECO:0000250"/>
    <property type="project" value="ARUK-UCL"/>
</dbReference>
<dbReference type="InterPro" id="IPR027324">
    <property type="entry name" value="MAP2/MAP4/Tau"/>
</dbReference>
<dbReference type="InterPro" id="IPR013588">
    <property type="entry name" value="MAP2_projctn"/>
</dbReference>
<dbReference type="InterPro" id="IPR001084">
    <property type="entry name" value="MAP_tubulin-bd_rpt"/>
</dbReference>
<dbReference type="PANTHER" id="PTHR11501">
    <property type="entry name" value="MICROTUBULE-ASSOCIATED PROTEIN"/>
    <property type="match status" value="1"/>
</dbReference>
<dbReference type="PANTHER" id="PTHR11501:SF15">
    <property type="entry name" value="MICROTUBULE-ASSOCIATED PROTEIN 2"/>
    <property type="match status" value="1"/>
</dbReference>
<dbReference type="Pfam" id="PF08377">
    <property type="entry name" value="MAP2_projctn"/>
    <property type="match status" value="1"/>
</dbReference>
<dbReference type="Pfam" id="PF00418">
    <property type="entry name" value="Tubulin-binding"/>
    <property type="match status" value="3"/>
</dbReference>
<dbReference type="PROSITE" id="PS00229">
    <property type="entry name" value="TAU_MAP_1"/>
    <property type="match status" value="2"/>
</dbReference>
<dbReference type="PROSITE" id="PS51491">
    <property type="entry name" value="TAU_MAP_2"/>
    <property type="match status" value="3"/>
</dbReference>
<accession>P11137</accession>
<accession>Q17S04</accession>
<accession>Q8IUX2</accession>
<accession>Q99975</accession>
<accession>Q99976</accession>
<reference key="1">
    <citation type="submission" date="1993-09" db="EMBL/GenBank/DDBJ databases">
        <title>Complete cDNA of human MAP2 gene and a profile of two RFLPs for BglII/BclI.</title>
        <authorList>
            <person name="Price R."/>
        </authorList>
    </citation>
    <scope>NUCLEOTIDE SEQUENCE [MRNA] (ISOFORM 1)</scope>
</reference>
<reference key="2">
    <citation type="journal article" date="1993" name="Gene">
        <title>Characterization of the transcripts encoding two isoforms of human microtubule-associated protein-2 (MAP-2).</title>
        <authorList>
            <person name="Albala J.S."/>
            <person name="Kalcheva N."/>
            <person name="Shafit-Zagardo B."/>
        </authorList>
    </citation>
    <scope>NUCLEOTIDE SEQUENCE [MRNA] (ISOFORMS 1; 2 AND 3)</scope>
    <source>
        <tissue>Brain</tissue>
    </source>
</reference>
<reference key="3">
    <citation type="journal article" date="2005" name="Nature">
        <title>Generation and annotation of the DNA sequences of human chromosomes 2 and 4.</title>
        <authorList>
            <person name="Hillier L.W."/>
            <person name="Graves T.A."/>
            <person name="Fulton R.S."/>
            <person name="Fulton L.A."/>
            <person name="Pepin K.H."/>
            <person name="Minx P."/>
            <person name="Wagner-McPherson C."/>
            <person name="Layman D."/>
            <person name="Wylie K."/>
            <person name="Sekhon M."/>
            <person name="Becker M.C."/>
            <person name="Fewell G.A."/>
            <person name="Delehaunty K.D."/>
            <person name="Miner T.L."/>
            <person name="Nash W.E."/>
            <person name="Kremitzki C."/>
            <person name="Oddy L."/>
            <person name="Du H."/>
            <person name="Sun H."/>
            <person name="Bradshaw-Cordum H."/>
            <person name="Ali J."/>
            <person name="Carter J."/>
            <person name="Cordes M."/>
            <person name="Harris A."/>
            <person name="Isak A."/>
            <person name="van Brunt A."/>
            <person name="Nguyen C."/>
            <person name="Du F."/>
            <person name="Courtney L."/>
            <person name="Kalicki J."/>
            <person name="Ozersky P."/>
            <person name="Abbott S."/>
            <person name="Armstrong J."/>
            <person name="Belter E.A."/>
            <person name="Caruso L."/>
            <person name="Cedroni M."/>
            <person name="Cotton M."/>
            <person name="Davidson T."/>
            <person name="Desai A."/>
            <person name="Elliott G."/>
            <person name="Erb T."/>
            <person name="Fronick C."/>
            <person name="Gaige T."/>
            <person name="Haakenson W."/>
            <person name="Haglund K."/>
            <person name="Holmes A."/>
            <person name="Harkins R."/>
            <person name="Kim K."/>
            <person name="Kruchowski S.S."/>
            <person name="Strong C.M."/>
            <person name="Grewal N."/>
            <person name="Goyea E."/>
            <person name="Hou S."/>
            <person name="Levy A."/>
            <person name="Martinka S."/>
            <person name="Mead K."/>
            <person name="McLellan M.D."/>
            <person name="Meyer R."/>
            <person name="Randall-Maher J."/>
            <person name="Tomlinson C."/>
            <person name="Dauphin-Kohlberg S."/>
            <person name="Kozlowicz-Reilly A."/>
            <person name="Shah N."/>
            <person name="Swearengen-Shahid S."/>
            <person name="Snider J."/>
            <person name="Strong J.T."/>
            <person name="Thompson J."/>
            <person name="Yoakum M."/>
            <person name="Leonard S."/>
            <person name="Pearman C."/>
            <person name="Trani L."/>
            <person name="Radionenko M."/>
            <person name="Waligorski J.E."/>
            <person name="Wang C."/>
            <person name="Rock S.M."/>
            <person name="Tin-Wollam A.-M."/>
            <person name="Maupin R."/>
            <person name="Latreille P."/>
            <person name="Wendl M.C."/>
            <person name="Yang S.-P."/>
            <person name="Pohl C."/>
            <person name="Wallis J.W."/>
            <person name="Spieth J."/>
            <person name="Bieri T.A."/>
            <person name="Berkowicz N."/>
            <person name="Nelson J.O."/>
            <person name="Osborne J."/>
            <person name="Ding L."/>
            <person name="Meyer R."/>
            <person name="Sabo A."/>
            <person name="Shotland Y."/>
            <person name="Sinha P."/>
            <person name="Wohldmann P.E."/>
            <person name="Cook L.L."/>
            <person name="Hickenbotham M.T."/>
            <person name="Eldred J."/>
            <person name="Williams D."/>
            <person name="Jones T.A."/>
            <person name="She X."/>
            <person name="Ciccarelli F.D."/>
            <person name="Izaurralde E."/>
            <person name="Taylor J."/>
            <person name="Schmutz J."/>
            <person name="Myers R.M."/>
            <person name="Cox D.R."/>
            <person name="Huang X."/>
            <person name="McPherson J.D."/>
            <person name="Mardis E.R."/>
            <person name="Clifton S.W."/>
            <person name="Warren W.C."/>
            <person name="Chinwalla A.T."/>
            <person name="Eddy S.R."/>
            <person name="Marra M.A."/>
            <person name="Ovcharenko I."/>
            <person name="Furey T.S."/>
            <person name="Miller W."/>
            <person name="Eichler E.E."/>
            <person name="Bork P."/>
            <person name="Suyama M."/>
            <person name="Torrents D."/>
            <person name="Waterston R.H."/>
            <person name="Wilson R.K."/>
        </authorList>
    </citation>
    <scope>NUCLEOTIDE SEQUENCE [LARGE SCALE GENOMIC DNA]</scope>
</reference>
<reference key="4">
    <citation type="submission" date="2005-07" db="EMBL/GenBank/DDBJ databases">
        <authorList>
            <person name="Mural R.J."/>
            <person name="Istrail S."/>
            <person name="Sutton G.G."/>
            <person name="Florea L."/>
            <person name="Halpern A.L."/>
            <person name="Mobarry C.M."/>
            <person name="Lippert R."/>
            <person name="Walenz B."/>
            <person name="Shatkay H."/>
            <person name="Dew I."/>
            <person name="Miller J.R."/>
            <person name="Flanigan M.J."/>
            <person name="Edwards N.J."/>
            <person name="Bolanos R."/>
            <person name="Fasulo D."/>
            <person name="Halldorsson B.V."/>
            <person name="Hannenhalli S."/>
            <person name="Turner R."/>
            <person name="Yooseph S."/>
            <person name="Lu F."/>
            <person name="Nusskern D.R."/>
            <person name="Shue B.C."/>
            <person name="Zheng X.H."/>
            <person name="Zhong F."/>
            <person name="Delcher A.L."/>
            <person name="Huson D.H."/>
            <person name="Kravitz S.A."/>
            <person name="Mouchard L."/>
            <person name="Reinert K."/>
            <person name="Remington K.A."/>
            <person name="Clark A.G."/>
            <person name="Waterman M.S."/>
            <person name="Eichler E.E."/>
            <person name="Adams M.D."/>
            <person name="Hunkapiller M.W."/>
            <person name="Myers E.W."/>
            <person name="Venter J.C."/>
        </authorList>
    </citation>
    <scope>NUCLEOTIDE SEQUENCE [LARGE SCALE GENOMIC DNA]</scope>
</reference>
<reference key="5">
    <citation type="journal article" date="2004" name="Genome Res.">
        <title>The status, quality, and expansion of the NIH full-length cDNA project: the Mammalian Gene Collection (MGC).</title>
        <authorList>
            <consortium name="The MGC Project Team"/>
        </authorList>
    </citation>
    <scope>NUCLEOTIDE SEQUENCE [LARGE SCALE MRNA] (ISOFORMS 2 AND 4)</scope>
    <source>
        <tissue>Brain</tissue>
        <tissue>Pancreas</tissue>
    </source>
</reference>
<reference key="6">
    <citation type="journal article" date="1989" name="J. Neurosci. Res.">
        <title>Sequence of a human MAP-2 region sharing epitopes with Alzheimer neurofibrillary tangles.</title>
        <authorList>
            <person name="Dammerman M."/>
            <person name="Yen S.H."/>
            <person name="Shafit-Zagardo B."/>
        </authorList>
    </citation>
    <scope>NUCLEOTIDE SEQUENCE [MRNA] OF 77-649 (ISOFORM 1)</scope>
</reference>
<reference key="7">
    <citation type="journal article" date="1988" name="J. Neurochem.">
        <title>Partial sequence of MAP2 in the region of a shared epitope with Alzheimer neurofibrillary tangles.</title>
        <authorList>
            <person name="Kosik K.S."/>
            <person name="Orecchio L.D."/>
            <person name="Bakalis S."/>
            <person name="Duffy L."/>
            <person name="Neve R.L."/>
        </authorList>
    </citation>
    <scope>NUCLEOTIDE SEQUENCE [MRNA] OF 494-1562 (ISOFORM 1)</scope>
</reference>
<reference key="8">
    <citation type="journal article" date="2005" name="J. Biol. Chem.">
        <title>Fyn phosphorylates human MAP-2c on tyrosine 67.</title>
        <authorList>
            <person name="Zamora-Leon S.P."/>
            <person name="Bresnick A."/>
            <person name="Backer J.M."/>
            <person name="Shafit-Zagardo B."/>
        </authorList>
    </citation>
    <scope>PHOSPHORYLATION AT TYR-67 (ISOFORM 2) BY FYN</scope>
</reference>
<reference key="9">
    <citation type="journal article" date="2006" name="Cell">
        <title>Global, in vivo, and site-specific phosphorylation dynamics in signaling networks.</title>
        <authorList>
            <person name="Olsen J.V."/>
            <person name="Blagoev B."/>
            <person name="Gnad F."/>
            <person name="Macek B."/>
            <person name="Kumar C."/>
            <person name="Mortensen P."/>
            <person name="Mann M."/>
        </authorList>
    </citation>
    <scope>IDENTIFICATION BY MASS SPECTROMETRY [LARGE SCALE ANALYSIS]</scope>
    <source>
        <tissue>Cervix carcinoma</tissue>
    </source>
</reference>
<reference key="10">
    <citation type="journal article" date="2008" name="J. Proteome Res.">
        <title>Combining protein-based IMAC, peptide-based IMAC, and MudPIT for efficient phosphoproteomic analysis.</title>
        <authorList>
            <person name="Cantin G.T."/>
            <person name="Yi W."/>
            <person name="Lu B."/>
            <person name="Park S.K."/>
            <person name="Xu T."/>
            <person name="Lee J.-D."/>
            <person name="Yates J.R. III"/>
        </authorList>
    </citation>
    <scope>IDENTIFICATION BY MASS SPECTROMETRY [LARGE SCALE ANALYSIS]</scope>
    <source>
        <tissue>Cervix carcinoma</tissue>
    </source>
</reference>
<reference key="11">
    <citation type="journal article" date="2011" name="Sci. Signal.">
        <title>System-wide temporal characterization of the proteome and phosphoproteome of human embryonic stem cell differentiation.</title>
        <authorList>
            <person name="Rigbolt K.T."/>
            <person name="Prokhorova T.A."/>
            <person name="Akimov V."/>
            <person name="Henningsen J."/>
            <person name="Johansen P.T."/>
            <person name="Kratchmarova I."/>
            <person name="Kassem M."/>
            <person name="Mann M."/>
            <person name="Olsen J.V."/>
            <person name="Blagoev B."/>
        </authorList>
    </citation>
    <scope>PHOSPHORYLATION [LARGE SCALE ANALYSIS] AT SER-1347 AND SER-1353</scope>
    <scope>IDENTIFICATION BY MASS SPECTROMETRY [LARGE SCALE ANALYSIS]</scope>
</reference>
<reference key="12">
    <citation type="journal article" date="2014" name="J. Proteomics">
        <title>An enzyme assisted RP-RPLC approach for in-depth analysis of human liver phosphoproteome.</title>
        <authorList>
            <person name="Bian Y."/>
            <person name="Song C."/>
            <person name="Cheng K."/>
            <person name="Dong M."/>
            <person name="Wang F."/>
            <person name="Huang J."/>
            <person name="Sun D."/>
            <person name="Wang L."/>
            <person name="Ye M."/>
            <person name="Zou H."/>
        </authorList>
    </citation>
    <scope>PHOSPHORYLATION [LARGE SCALE ANALYSIS] AT SER-1782</scope>
    <scope>IDENTIFICATION BY MASS SPECTROMETRY [LARGE SCALE ANALYSIS]</scope>
    <source>
        <tissue>Liver</tissue>
    </source>
</reference>
<reference key="13">
    <citation type="journal article" date="2021" name="Am. J. Hum. Genet.">
        <title>Missense variants in DPYSL5 cause a neurodevelopmental disorder with corpus callosum agenesis and cerebellar abnormalities.</title>
        <authorList>
            <person name="Jeanne M."/>
            <person name="Demory H."/>
            <person name="Moutal A."/>
            <person name="Vuillaume M.L."/>
            <person name="Blesson S."/>
            <person name="Thepault R.A."/>
            <person name="Marouillat S."/>
            <person name="Halewa J."/>
            <person name="Maas S.M."/>
            <person name="Motazacker M.M."/>
            <person name="Mancini G.M.S."/>
            <person name="van Slegtenhorst M.A."/>
            <person name="Andreou A."/>
            <person name="Cox H."/>
            <person name="Vogt J."/>
            <person name="Laufman J."/>
            <person name="Kostandyan N."/>
            <person name="Babikyan D."/>
            <person name="Hancarova M."/>
            <person name="Bendova S."/>
            <person name="Sedlacek Z."/>
            <person name="Aldinger K.A."/>
            <person name="Sherr E.H."/>
            <person name="Argilli E."/>
            <person name="England E.M."/>
            <person name="Audebert-Bellanger S."/>
            <person name="Bonneau D."/>
            <person name="Colin E."/>
            <person name="Denomme-Pichon A.S."/>
            <person name="Gilbert-Dussardier B."/>
            <person name="Isidor B."/>
            <person name="Kuery S."/>
            <person name="Odent S."/>
            <person name="Redon R."/>
            <person name="Khanna R."/>
            <person name="Dobyns W.B."/>
            <person name="Bezieau S."/>
            <person name="Honnorat J."/>
            <person name="Lohkamp B."/>
            <person name="Toutain A."/>
            <person name="Laumonnier F."/>
        </authorList>
    </citation>
    <scope>INTERACTION WITH DPYSL5</scope>
</reference>
<reference key="14">
    <citation type="journal article" date="2006" name="Science">
        <title>The consensus coding sequences of human breast and colorectal cancers.</title>
        <authorList>
            <person name="Sjoeblom T."/>
            <person name="Jones S."/>
            <person name="Wood L.D."/>
            <person name="Parsons D.W."/>
            <person name="Lin J."/>
            <person name="Barber T.D."/>
            <person name="Mandelker D."/>
            <person name="Leary R.J."/>
            <person name="Ptak J."/>
            <person name="Silliman N."/>
            <person name="Szabo S."/>
            <person name="Buckhaults P."/>
            <person name="Farrell C."/>
            <person name="Meeh P."/>
            <person name="Markowitz S.D."/>
            <person name="Willis J."/>
            <person name="Dawson D."/>
            <person name="Willson J.K.V."/>
            <person name="Gazdar A.F."/>
            <person name="Hartigan J."/>
            <person name="Wu L."/>
            <person name="Liu C."/>
            <person name="Parmigiani G."/>
            <person name="Park B.H."/>
            <person name="Bachman K.E."/>
            <person name="Papadopoulos N."/>
            <person name="Vogelstein B."/>
            <person name="Kinzler K.W."/>
            <person name="Velculescu V.E."/>
        </authorList>
    </citation>
    <scope>VARIANTS [LARGE SCALE ANALYSIS] ASP-277 AND LEU-705</scope>
</reference>
<sequence>MADERKDEAKAPHWTSAPLTEASAHSHPPEIKDQGGAGEGLVRSANGFPYREDEEGAFGEHGSQGTYSNTKENGINGELTSADRETAEEVSARIVQVVTAEAVAVLKGEQEKEAQHKDQTAALPLAAEETANLPPSPPPSPASEQTVTVEEDLLTASKMEFHDQQELTPSTAEPSDQKEKESEKQSKPGEDLKHAALVSQPETTKTYPDKKDMQGTEEEKAPLALFGHTLVASLEDMKQKTEPSLVVPGIDLPKEPPTPKEQKDWFIEMPTEAKKDEWGLVAPISPGPLTPMREKDVFDDIPKWEGKQFDSPMPSPFQGGSFTLPLDVMKNEIVTETSPFAPAFLQPDDKKSLQQTSGPATAKDSFKIEEPHEAKPDKMAEAPPSEAMTLPKDAHIPVVEEHVMGKVLEEEKEAINQETVQQRDTFTPSGQEPILTEKETELKLEEKTTISDKEAVPKESKPPKPADEEIGIIQTSTEHTFSEQKDQEPTTDMLKQDSFPVSLEQAVTDSAMTSKTLEKAMTEPSALIEKSSIQELFEMRVDDKDKIEGVGAATSAELDMPFYEDKSGMSKYFETSALKEEATKSIEPGSDYYELSDTRESVHESIDTMSPMHKNGDKEFQTGKESQPSPPAQEAGYSTLAQSYPSDLPEEPSSPQERMFTIDPKVYGEKRDLHSKNKDDLTLSRSLGLGGRSAIEQRSMSINLPMSCLDSIALGFNFGRGHDLSPLASDILTNTSGSMDEGDDYLPATTPALEKAPCFPVESKEEEQIEKVKATGEESTQAEISCESPFLAKDFYKNGTVMAPDLPEMLDLAGTRSRLASVSADAEVARRKSVPSETVVEDSRTGLPPVTDENHVIVKTDSQLEDLGYCVFNKYTVPLPSPVQDSENLSGESGTFYEGTDDKVRRDLATDLSLIEVKLAAAGRVKDEFSVDKEASAHISGDKSGLSKEFDQEKKANDRLDTVLEKSEEHADSKEHAKKTEEAGDEIETFGLGVTYEQALAKDLSIPTDASSEKAEKGLSSVPEIAEVEPSKKVEQGLDFAVQGQLDVKISDFGQMASGLNIDDRRATELKLEATQDMTPSSKAPQEADAFMGVESGHMKEGTKVSETEVKEKVAKPDLVHQEAVDKEESYESSGEHESLTMESLKADEGKKETSPESSLIQDEIAVKLSVEIPCPPAVSEADLATDERADVQMEFIQGPKEESKETPDISITPSDVAEPLHETIVSEPAEIQSEEEEIEAQGEYDKLLFRSDTLQITDLGVSGAREEFVETCPSEHKGVIESVVTIEDDFITVVQTTTDEGESGSHSVRFAALEQPEVERRPSPHDEEEFEVEEAAEAQAEPKDGSPEAPASPEREEVALSEYKTETYDDYKDETTIDDSIMDADSLWVDTQDDDRSIMTEQLETIPKEEKAEKEARRSSLEKHRKEKPFKTGRGRISTPERKVAKKEPSTVSRDEVRRKKAVYKKAELAKKTEVQAHSPSRKFILKPAIKYTRPTHLSCVKRKTTAAGGESALAPSVFKQAKDKVSDGVTKSPEKRSSLPRPSSILPPRRGVSGDRDENSFSLNSSISSSARRTTRSEPIRRAGKSGTSTPTTPGSTAITPGTPPSYSSRTPGTPGTPSYPRTPHTPGTPKSAILVPSEKKVAIIRTPPKSPATPKQLRLINQPLPDLKNVKSKIGSTDNIKYQPKGGQVQIVTKKIDLSHVTSKCGSLKNIRHRPGGGRVKIESVKLDFKEKAQAKVGSLDNAHHVPGGGNVKIDSQKLNFREHAKARVDHGAEIITQSPGRSSVASPRRLSNVSSSGSINLLESPQLATLAEDVTAALAKQGL</sequence>
<name>MTAP2_HUMAN</name>
<evidence type="ECO:0000250" key="1">
    <source>
        <dbReference type="UniProtKB" id="P15146"/>
    </source>
</evidence>
<evidence type="ECO:0000250" key="2">
    <source>
        <dbReference type="UniProtKB" id="P20357"/>
    </source>
</evidence>
<evidence type="ECO:0000255" key="3"/>
<evidence type="ECO:0000256" key="4">
    <source>
        <dbReference type="SAM" id="MobiDB-lite"/>
    </source>
</evidence>
<evidence type="ECO:0000269" key="5">
    <source>
    </source>
</evidence>
<evidence type="ECO:0000269" key="6">
    <source>
    </source>
</evidence>
<evidence type="ECO:0000269" key="7">
    <source>
    </source>
</evidence>
<evidence type="ECO:0000303" key="8">
    <source>
    </source>
</evidence>
<evidence type="ECO:0000303" key="9">
    <source>
    </source>
</evidence>
<evidence type="ECO:0000305" key="10"/>
<evidence type="ECO:0007744" key="11">
    <source>
    </source>
</evidence>
<evidence type="ECO:0007744" key="12">
    <source>
    </source>
</evidence>